<proteinExistence type="inferred from homology"/>
<name>NDK_HERA2</name>
<gene>
    <name evidence="1" type="primary">ndk</name>
    <name type="ordered locus">Haur_4224</name>
</gene>
<keyword id="KW-0067">ATP-binding</keyword>
<keyword id="KW-0963">Cytoplasm</keyword>
<keyword id="KW-0418">Kinase</keyword>
<keyword id="KW-0460">Magnesium</keyword>
<keyword id="KW-0479">Metal-binding</keyword>
<keyword id="KW-0546">Nucleotide metabolism</keyword>
<keyword id="KW-0547">Nucleotide-binding</keyword>
<keyword id="KW-0597">Phosphoprotein</keyword>
<keyword id="KW-0808">Transferase</keyword>
<reference key="1">
    <citation type="journal article" date="2011" name="Stand. Genomic Sci.">
        <title>Complete genome sequence of the filamentous gliding predatory bacterium Herpetosiphon aurantiacus type strain (114-95(T)).</title>
        <authorList>
            <person name="Kiss H."/>
            <person name="Nett M."/>
            <person name="Domin N."/>
            <person name="Martin K."/>
            <person name="Maresca J.A."/>
            <person name="Copeland A."/>
            <person name="Lapidus A."/>
            <person name="Lucas S."/>
            <person name="Berry K.W."/>
            <person name="Glavina Del Rio T."/>
            <person name="Dalin E."/>
            <person name="Tice H."/>
            <person name="Pitluck S."/>
            <person name="Richardson P."/>
            <person name="Bruce D."/>
            <person name="Goodwin L."/>
            <person name="Han C."/>
            <person name="Detter J.C."/>
            <person name="Schmutz J."/>
            <person name="Brettin T."/>
            <person name="Land M."/>
            <person name="Hauser L."/>
            <person name="Kyrpides N.C."/>
            <person name="Ivanova N."/>
            <person name="Goeker M."/>
            <person name="Woyke T."/>
            <person name="Klenk H.P."/>
            <person name="Bryant D.A."/>
        </authorList>
    </citation>
    <scope>NUCLEOTIDE SEQUENCE [LARGE SCALE GENOMIC DNA]</scope>
    <source>
        <strain>ATCC 23779 / DSM 785 / 114-95</strain>
    </source>
</reference>
<evidence type="ECO:0000255" key="1">
    <source>
        <dbReference type="HAMAP-Rule" id="MF_00451"/>
    </source>
</evidence>
<dbReference type="EC" id="2.7.4.6" evidence="1"/>
<dbReference type="EMBL" id="CP000875">
    <property type="protein sequence ID" value="ABX06856.1"/>
    <property type="molecule type" value="Genomic_DNA"/>
</dbReference>
<dbReference type="SMR" id="A9AXD6"/>
<dbReference type="FunCoup" id="A9AXD6">
    <property type="interactions" value="478"/>
</dbReference>
<dbReference type="STRING" id="316274.Haur_4224"/>
<dbReference type="KEGG" id="hau:Haur_4224"/>
<dbReference type="eggNOG" id="COG0105">
    <property type="taxonomic scope" value="Bacteria"/>
</dbReference>
<dbReference type="HOGENOM" id="CLU_060216_6_3_0"/>
<dbReference type="InParanoid" id="A9AXD6"/>
<dbReference type="Proteomes" id="UP000000787">
    <property type="component" value="Chromosome"/>
</dbReference>
<dbReference type="GO" id="GO:0005737">
    <property type="term" value="C:cytoplasm"/>
    <property type="evidence" value="ECO:0007669"/>
    <property type="project" value="UniProtKB-SubCell"/>
</dbReference>
<dbReference type="GO" id="GO:0005524">
    <property type="term" value="F:ATP binding"/>
    <property type="evidence" value="ECO:0007669"/>
    <property type="project" value="UniProtKB-UniRule"/>
</dbReference>
<dbReference type="GO" id="GO:0046872">
    <property type="term" value="F:metal ion binding"/>
    <property type="evidence" value="ECO:0007669"/>
    <property type="project" value="UniProtKB-KW"/>
</dbReference>
<dbReference type="GO" id="GO:0004550">
    <property type="term" value="F:nucleoside diphosphate kinase activity"/>
    <property type="evidence" value="ECO:0007669"/>
    <property type="project" value="UniProtKB-UniRule"/>
</dbReference>
<dbReference type="GO" id="GO:0006241">
    <property type="term" value="P:CTP biosynthetic process"/>
    <property type="evidence" value="ECO:0007669"/>
    <property type="project" value="UniProtKB-UniRule"/>
</dbReference>
<dbReference type="GO" id="GO:0006183">
    <property type="term" value="P:GTP biosynthetic process"/>
    <property type="evidence" value="ECO:0007669"/>
    <property type="project" value="UniProtKB-UniRule"/>
</dbReference>
<dbReference type="GO" id="GO:0006228">
    <property type="term" value="P:UTP biosynthetic process"/>
    <property type="evidence" value="ECO:0007669"/>
    <property type="project" value="UniProtKB-UniRule"/>
</dbReference>
<dbReference type="CDD" id="cd04413">
    <property type="entry name" value="NDPk_I"/>
    <property type="match status" value="1"/>
</dbReference>
<dbReference type="FunFam" id="3.30.70.141:FF:000003">
    <property type="entry name" value="Nucleoside diphosphate kinase"/>
    <property type="match status" value="1"/>
</dbReference>
<dbReference type="Gene3D" id="3.30.70.141">
    <property type="entry name" value="Nucleoside diphosphate kinase-like domain"/>
    <property type="match status" value="1"/>
</dbReference>
<dbReference type="HAMAP" id="MF_00451">
    <property type="entry name" value="NDP_kinase"/>
    <property type="match status" value="1"/>
</dbReference>
<dbReference type="InterPro" id="IPR034907">
    <property type="entry name" value="NDK-like_dom"/>
</dbReference>
<dbReference type="InterPro" id="IPR036850">
    <property type="entry name" value="NDK-like_dom_sf"/>
</dbReference>
<dbReference type="InterPro" id="IPR001564">
    <property type="entry name" value="Nucleoside_diP_kinase"/>
</dbReference>
<dbReference type="InterPro" id="IPR023005">
    <property type="entry name" value="Nucleoside_diP_kinase_AS"/>
</dbReference>
<dbReference type="NCBIfam" id="NF001908">
    <property type="entry name" value="PRK00668.1"/>
    <property type="match status" value="1"/>
</dbReference>
<dbReference type="PANTHER" id="PTHR11349">
    <property type="entry name" value="NUCLEOSIDE DIPHOSPHATE KINASE"/>
    <property type="match status" value="1"/>
</dbReference>
<dbReference type="Pfam" id="PF00334">
    <property type="entry name" value="NDK"/>
    <property type="match status" value="1"/>
</dbReference>
<dbReference type="PRINTS" id="PR01243">
    <property type="entry name" value="NUCDPKINASE"/>
</dbReference>
<dbReference type="SMART" id="SM00562">
    <property type="entry name" value="NDK"/>
    <property type="match status" value="1"/>
</dbReference>
<dbReference type="SUPFAM" id="SSF54919">
    <property type="entry name" value="Nucleoside diphosphate kinase, NDK"/>
    <property type="match status" value="1"/>
</dbReference>
<dbReference type="PROSITE" id="PS00469">
    <property type="entry name" value="NDPK"/>
    <property type="match status" value="1"/>
</dbReference>
<dbReference type="PROSITE" id="PS51374">
    <property type="entry name" value="NDPK_LIKE"/>
    <property type="match status" value="1"/>
</dbReference>
<accession>A9AXD6</accession>
<comment type="function">
    <text evidence="1">Major role in the synthesis of nucleoside triphosphates other than ATP. The ATP gamma phosphate is transferred to the NDP beta phosphate via a ping-pong mechanism, using a phosphorylated active-site intermediate.</text>
</comment>
<comment type="catalytic activity">
    <reaction evidence="1">
        <text>a 2'-deoxyribonucleoside 5'-diphosphate + ATP = a 2'-deoxyribonucleoside 5'-triphosphate + ADP</text>
        <dbReference type="Rhea" id="RHEA:44640"/>
        <dbReference type="ChEBI" id="CHEBI:30616"/>
        <dbReference type="ChEBI" id="CHEBI:61560"/>
        <dbReference type="ChEBI" id="CHEBI:73316"/>
        <dbReference type="ChEBI" id="CHEBI:456216"/>
        <dbReference type="EC" id="2.7.4.6"/>
    </reaction>
</comment>
<comment type="catalytic activity">
    <reaction evidence="1">
        <text>a ribonucleoside 5'-diphosphate + ATP = a ribonucleoside 5'-triphosphate + ADP</text>
        <dbReference type="Rhea" id="RHEA:18113"/>
        <dbReference type="ChEBI" id="CHEBI:30616"/>
        <dbReference type="ChEBI" id="CHEBI:57930"/>
        <dbReference type="ChEBI" id="CHEBI:61557"/>
        <dbReference type="ChEBI" id="CHEBI:456216"/>
        <dbReference type="EC" id="2.7.4.6"/>
    </reaction>
</comment>
<comment type="cofactor">
    <cofactor evidence="1">
        <name>Mg(2+)</name>
        <dbReference type="ChEBI" id="CHEBI:18420"/>
    </cofactor>
</comment>
<comment type="subunit">
    <text evidence="1">Homotetramer.</text>
</comment>
<comment type="subcellular location">
    <subcellularLocation>
        <location evidence="1">Cytoplasm</location>
    </subcellularLocation>
</comment>
<comment type="similarity">
    <text evidence="1">Belongs to the NDK family.</text>
</comment>
<feature type="chain" id="PRO_1000192264" description="Nucleoside diphosphate kinase">
    <location>
        <begin position="1"/>
        <end position="149"/>
    </location>
</feature>
<feature type="active site" description="Pros-phosphohistidine intermediate" evidence="1">
    <location>
        <position position="115"/>
    </location>
</feature>
<feature type="binding site" evidence="1">
    <location>
        <position position="9"/>
    </location>
    <ligand>
        <name>ATP</name>
        <dbReference type="ChEBI" id="CHEBI:30616"/>
    </ligand>
</feature>
<feature type="binding site" evidence="1">
    <location>
        <position position="57"/>
    </location>
    <ligand>
        <name>ATP</name>
        <dbReference type="ChEBI" id="CHEBI:30616"/>
    </ligand>
</feature>
<feature type="binding site" evidence="1">
    <location>
        <position position="85"/>
    </location>
    <ligand>
        <name>ATP</name>
        <dbReference type="ChEBI" id="CHEBI:30616"/>
    </ligand>
</feature>
<feature type="binding site" evidence="1">
    <location>
        <position position="91"/>
    </location>
    <ligand>
        <name>ATP</name>
        <dbReference type="ChEBI" id="CHEBI:30616"/>
    </ligand>
</feature>
<feature type="binding site" evidence="1">
    <location>
        <position position="102"/>
    </location>
    <ligand>
        <name>ATP</name>
        <dbReference type="ChEBI" id="CHEBI:30616"/>
    </ligand>
</feature>
<feature type="binding site" evidence="1">
    <location>
        <position position="112"/>
    </location>
    <ligand>
        <name>ATP</name>
        <dbReference type="ChEBI" id="CHEBI:30616"/>
    </ligand>
</feature>
<organism>
    <name type="scientific">Herpetosiphon aurantiacus (strain ATCC 23779 / DSM 785 / 114-95)</name>
    <dbReference type="NCBI Taxonomy" id="316274"/>
    <lineage>
        <taxon>Bacteria</taxon>
        <taxon>Bacillati</taxon>
        <taxon>Chloroflexota</taxon>
        <taxon>Chloroflexia</taxon>
        <taxon>Herpetosiphonales</taxon>
        <taxon>Herpetosiphonaceae</taxon>
        <taxon>Herpetosiphon</taxon>
    </lineage>
</organism>
<sequence length="149" mass="16113">MEKSLIILKPDAVQRGLIGPILTRLEARGLKFIGIKLSQVSSELAHKHYGVHEGKPFFAGLVSYITSGPVLVVAVEGKDVIEIVRSTVGATNPVKAAPGTIRGDFGVNIGRNLIHASDSPENGDHEVALFFSSEELIRSERSVDQWITE</sequence>
<protein>
    <recommendedName>
        <fullName evidence="1">Nucleoside diphosphate kinase</fullName>
        <shortName evidence="1">NDK</shortName>
        <shortName evidence="1">NDP kinase</shortName>
        <ecNumber evidence="1">2.7.4.6</ecNumber>
    </recommendedName>
    <alternativeName>
        <fullName evidence="1">Nucleoside-2-P kinase</fullName>
    </alternativeName>
</protein>